<protein>
    <recommendedName>
        <fullName evidence="1">Pantothenate synthetase</fullName>
        <shortName evidence="1">PS</shortName>
        <ecNumber evidence="1">6.3.2.1</ecNumber>
    </recommendedName>
    <alternativeName>
        <fullName evidence="1">Pantoate--beta-alanine ligase</fullName>
    </alternativeName>
    <alternativeName>
        <fullName evidence="1">Pantoate-activating enzyme</fullName>
    </alternativeName>
</protein>
<reference key="1">
    <citation type="submission" date="2006-12" db="EMBL/GenBank/DDBJ databases">
        <title>Complete sequence of Chlorobium phaeobacteroides DSM 266.</title>
        <authorList>
            <consortium name="US DOE Joint Genome Institute"/>
            <person name="Copeland A."/>
            <person name="Lucas S."/>
            <person name="Lapidus A."/>
            <person name="Barry K."/>
            <person name="Detter J.C."/>
            <person name="Glavina del Rio T."/>
            <person name="Hammon N."/>
            <person name="Israni S."/>
            <person name="Pitluck S."/>
            <person name="Goltsman E."/>
            <person name="Schmutz J."/>
            <person name="Larimer F."/>
            <person name="Land M."/>
            <person name="Hauser L."/>
            <person name="Mikhailova N."/>
            <person name="Li T."/>
            <person name="Overmann J."/>
            <person name="Bryant D.A."/>
            <person name="Richardson P."/>
        </authorList>
    </citation>
    <scope>NUCLEOTIDE SEQUENCE [LARGE SCALE GENOMIC DNA]</scope>
    <source>
        <strain>DSM 266 / SMG 266 / 2430</strain>
    </source>
</reference>
<name>PANC_CHLPD</name>
<keyword id="KW-0067">ATP-binding</keyword>
<keyword id="KW-0963">Cytoplasm</keyword>
<keyword id="KW-0436">Ligase</keyword>
<keyword id="KW-0547">Nucleotide-binding</keyword>
<keyword id="KW-0566">Pantothenate biosynthesis</keyword>
<keyword id="KW-1185">Reference proteome</keyword>
<sequence>MQIITDPIQMQAIAEKLRLNRQLIGVVMTMGALHEGHLSLIKEARKIAGTIILTIFVNPRQFAPHEDFHRYPRPFEQDAAHAKAAEVDYVFAPPVDAMYTGNFQTTVHPGPLGEQFEGKQRPGHFSGVATIVTKLLQITRPHIAVFGEKDAQQLAVIKQLVKDLNIDVRIIEAPIIRDENGLAVSSRNIYLSAKERDAATVLYKGLCHAERRIAEPCLDLDAIVPEVENIIKSALSCHPEYICFVDDETFLPASKAEKGKTYRLLLAVQAGTVRLIDNRKFMV</sequence>
<proteinExistence type="inferred from homology"/>
<dbReference type="EC" id="6.3.2.1" evidence="1"/>
<dbReference type="EMBL" id="CP000492">
    <property type="protein sequence ID" value="ABL64609.1"/>
    <property type="molecule type" value="Genomic_DNA"/>
</dbReference>
<dbReference type="RefSeq" id="WP_011744442.1">
    <property type="nucleotide sequence ID" value="NC_008639.1"/>
</dbReference>
<dbReference type="SMR" id="A1BDY2"/>
<dbReference type="STRING" id="290317.Cpha266_0553"/>
<dbReference type="KEGG" id="cph:Cpha266_0553"/>
<dbReference type="eggNOG" id="COG0414">
    <property type="taxonomic scope" value="Bacteria"/>
</dbReference>
<dbReference type="HOGENOM" id="CLU_047148_0_0_10"/>
<dbReference type="OrthoDB" id="9773087at2"/>
<dbReference type="UniPathway" id="UPA00028">
    <property type="reaction ID" value="UER00005"/>
</dbReference>
<dbReference type="Proteomes" id="UP000008701">
    <property type="component" value="Chromosome"/>
</dbReference>
<dbReference type="GO" id="GO:0005829">
    <property type="term" value="C:cytosol"/>
    <property type="evidence" value="ECO:0007669"/>
    <property type="project" value="TreeGrafter"/>
</dbReference>
<dbReference type="GO" id="GO:0005524">
    <property type="term" value="F:ATP binding"/>
    <property type="evidence" value="ECO:0007669"/>
    <property type="project" value="UniProtKB-KW"/>
</dbReference>
<dbReference type="GO" id="GO:0004592">
    <property type="term" value="F:pantoate-beta-alanine ligase activity"/>
    <property type="evidence" value="ECO:0007669"/>
    <property type="project" value="UniProtKB-UniRule"/>
</dbReference>
<dbReference type="GO" id="GO:0015940">
    <property type="term" value="P:pantothenate biosynthetic process"/>
    <property type="evidence" value="ECO:0007669"/>
    <property type="project" value="UniProtKB-UniRule"/>
</dbReference>
<dbReference type="CDD" id="cd00560">
    <property type="entry name" value="PanC"/>
    <property type="match status" value="1"/>
</dbReference>
<dbReference type="FunFam" id="3.40.50.620:FF:000114">
    <property type="entry name" value="Pantothenate synthetase"/>
    <property type="match status" value="1"/>
</dbReference>
<dbReference type="Gene3D" id="3.40.50.620">
    <property type="entry name" value="HUPs"/>
    <property type="match status" value="1"/>
</dbReference>
<dbReference type="Gene3D" id="3.30.1300.10">
    <property type="entry name" value="Pantoate-beta-alanine ligase, C-terminal domain"/>
    <property type="match status" value="1"/>
</dbReference>
<dbReference type="HAMAP" id="MF_00158">
    <property type="entry name" value="PanC"/>
    <property type="match status" value="1"/>
</dbReference>
<dbReference type="InterPro" id="IPR004821">
    <property type="entry name" value="Cyt_trans-like"/>
</dbReference>
<dbReference type="InterPro" id="IPR003721">
    <property type="entry name" value="Pantoate_ligase"/>
</dbReference>
<dbReference type="InterPro" id="IPR042176">
    <property type="entry name" value="Pantoate_ligase_C"/>
</dbReference>
<dbReference type="InterPro" id="IPR014729">
    <property type="entry name" value="Rossmann-like_a/b/a_fold"/>
</dbReference>
<dbReference type="NCBIfam" id="TIGR00125">
    <property type="entry name" value="cyt_tran_rel"/>
    <property type="match status" value="1"/>
</dbReference>
<dbReference type="NCBIfam" id="TIGR00018">
    <property type="entry name" value="panC"/>
    <property type="match status" value="1"/>
</dbReference>
<dbReference type="PANTHER" id="PTHR21299">
    <property type="entry name" value="CYTIDYLATE KINASE/PANTOATE-BETA-ALANINE LIGASE"/>
    <property type="match status" value="1"/>
</dbReference>
<dbReference type="PANTHER" id="PTHR21299:SF1">
    <property type="entry name" value="PANTOATE--BETA-ALANINE LIGASE"/>
    <property type="match status" value="1"/>
</dbReference>
<dbReference type="Pfam" id="PF02569">
    <property type="entry name" value="Pantoate_ligase"/>
    <property type="match status" value="1"/>
</dbReference>
<dbReference type="SUPFAM" id="SSF52374">
    <property type="entry name" value="Nucleotidylyl transferase"/>
    <property type="match status" value="1"/>
</dbReference>
<feature type="chain" id="PRO_0000305424" description="Pantothenate synthetase">
    <location>
        <begin position="1"/>
        <end position="283"/>
    </location>
</feature>
<feature type="active site" description="Proton donor" evidence="1">
    <location>
        <position position="37"/>
    </location>
</feature>
<feature type="binding site" evidence="1">
    <location>
        <begin position="30"/>
        <end position="37"/>
    </location>
    <ligand>
        <name>ATP</name>
        <dbReference type="ChEBI" id="CHEBI:30616"/>
    </ligand>
</feature>
<feature type="binding site" evidence="1">
    <location>
        <position position="61"/>
    </location>
    <ligand>
        <name>(R)-pantoate</name>
        <dbReference type="ChEBI" id="CHEBI:15980"/>
    </ligand>
</feature>
<feature type="binding site" evidence="1">
    <location>
        <position position="61"/>
    </location>
    <ligand>
        <name>beta-alanine</name>
        <dbReference type="ChEBI" id="CHEBI:57966"/>
    </ligand>
</feature>
<feature type="binding site" evidence="1">
    <location>
        <begin position="147"/>
        <end position="150"/>
    </location>
    <ligand>
        <name>ATP</name>
        <dbReference type="ChEBI" id="CHEBI:30616"/>
    </ligand>
</feature>
<feature type="binding site" evidence="1">
    <location>
        <position position="153"/>
    </location>
    <ligand>
        <name>(R)-pantoate</name>
        <dbReference type="ChEBI" id="CHEBI:15980"/>
    </ligand>
</feature>
<feature type="binding site" evidence="1">
    <location>
        <position position="176"/>
    </location>
    <ligand>
        <name>ATP</name>
        <dbReference type="ChEBI" id="CHEBI:30616"/>
    </ligand>
</feature>
<feature type="binding site" evidence="1">
    <location>
        <begin position="184"/>
        <end position="187"/>
    </location>
    <ligand>
        <name>ATP</name>
        <dbReference type="ChEBI" id="CHEBI:30616"/>
    </ligand>
</feature>
<organism>
    <name type="scientific">Chlorobium phaeobacteroides (strain DSM 266 / SMG 266 / 2430)</name>
    <dbReference type="NCBI Taxonomy" id="290317"/>
    <lineage>
        <taxon>Bacteria</taxon>
        <taxon>Pseudomonadati</taxon>
        <taxon>Chlorobiota</taxon>
        <taxon>Chlorobiia</taxon>
        <taxon>Chlorobiales</taxon>
        <taxon>Chlorobiaceae</taxon>
        <taxon>Chlorobium/Pelodictyon group</taxon>
        <taxon>Chlorobium</taxon>
    </lineage>
</organism>
<accession>A1BDY2</accession>
<evidence type="ECO:0000255" key="1">
    <source>
        <dbReference type="HAMAP-Rule" id="MF_00158"/>
    </source>
</evidence>
<gene>
    <name evidence="1" type="primary">panC</name>
    <name type="ordered locus">Cpha266_0553</name>
</gene>
<comment type="function">
    <text evidence="1">Catalyzes the condensation of pantoate with beta-alanine in an ATP-dependent reaction via a pantoyl-adenylate intermediate.</text>
</comment>
<comment type="catalytic activity">
    <reaction evidence="1">
        <text>(R)-pantoate + beta-alanine + ATP = (R)-pantothenate + AMP + diphosphate + H(+)</text>
        <dbReference type="Rhea" id="RHEA:10912"/>
        <dbReference type="ChEBI" id="CHEBI:15378"/>
        <dbReference type="ChEBI" id="CHEBI:15980"/>
        <dbReference type="ChEBI" id="CHEBI:29032"/>
        <dbReference type="ChEBI" id="CHEBI:30616"/>
        <dbReference type="ChEBI" id="CHEBI:33019"/>
        <dbReference type="ChEBI" id="CHEBI:57966"/>
        <dbReference type="ChEBI" id="CHEBI:456215"/>
        <dbReference type="EC" id="6.3.2.1"/>
    </reaction>
</comment>
<comment type="pathway">
    <text evidence="1">Cofactor biosynthesis; (R)-pantothenate biosynthesis; (R)-pantothenate from (R)-pantoate and beta-alanine: step 1/1.</text>
</comment>
<comment type="subunit">
    <text evidence="1">Homodimer.</text>
</comment>
<comment type="subcellular location">
    <subcellularLocation>
        <location evidence="1">Cytoplasm</location>
    </subcellularLocation>
</comment>
<comment type="miscellaneous">
    <text evidence="1">The reaction proceeds by a bi uni uni bi ping pong mechanism.</text>
</comment>
<comment type="similarity">
    <text evidence="1">Belongs to the pantothenate synthetase family.</text>
</comment>